<protein>
    <recommendedName>
        <fullName evidence="1">Small heat shock protein IbpA</fullName>
    </recommendedName>
    <alternativeName>
        <fullName evidence="1">16 kDa heat shock protein A</fullName>
    </alternativeName>
</protein>
<feature type="chain" id="PRO_1000022022" description="Small heat shock protein IbpA">
    <location>
        <begin position="1"/>
        <end position="137"/>
    </location>
</feature>
<feature type="domain" description="sHSP" evidence="2">
    <location>
        <begin position="28"/>
        <end position="137"/>
    </location>
</feature>
<organism>
    <name type="scientific">Escherichia coli O6:K15:H31 (strain 536 / UPEC)</name>
    <dbReference type="NCBI Taxonomy" id="362663"/>
    <lineage>
        <taxon>Bacteria</taxon>
        <taxon>Pseudomonadati</taxon>
        <taxon>Pseudomonadota</taxon>
        <taxon>Gammaproteobacteria</taxon>
        <taxon>Enterobacterales</taxon>
        <taxon>Enterobacteriaceae</taxon>
        <taxon>Escherichia</taxon>
    </lineage>
</organism>
<reference key="1">
    <citation type="journal article" date="2006" name="Mol. Microbiol.">
        <title>Role of pathogenicity island-associated integrases in the genome plasticity of uropathogenic Escherichia coli strain 536.</title>
        <authorList>
            <person name="Hochhut B."/>
            <person name="Wilde C."/>
            <person name="Balling G."/>
            <person name="Middendorf B."/>
            <person name="Dobrindt U."/>
            <person name="Brzuszkiewicz E."/>
            <person name="Gottschalk G."/>
            <person name="Carniel E."/>
            <person name="Hacker J."/>
        </authorList>
    </citation>
    <scope>NUCLEOTIDE SEQUENCE [LARGE SCALE GENOMIC DNA]</scope>
    <source>
        <strain>536 / UPEC</strain>
    </source>
</reference>
<keyword id="KW-0143">Chaperone</keyword>
<keyword id="KW-0963">Cytoplasm</keyword>
<keyword id="KW-0346">Stress response</keyword>
<proteinExistence type="inferred from homology"/>
<name>IBPA_ECOL5</name>
<sequence>MRNFDLSPLYRSAIGFDRLFNHLENNQSQSNGGYPPYNVELVDENHYRIAIAVAGFAESELEITAQDNLLVVKGAHADEQKERTYLYQGIAERNFERKFQLAENIHVRGANLVNGLLYIDLERVIPEAKKPRRIEIN</sequence>
<dbReference type="EMBL" id="CP000247">
    <property type="protein sequence ID" value="ABG71859.1"/>
    <property type="molecule type" value="Genomic_DNA"/>
</dbReference>
<dbReference type="RefSeq" id="WP_001243437.1">
    <property type="nucleotide sequence ID" value="NC_008253.1"/>
</dbReference>
<dbReference type="SMR" id="Q0TB20"/>
<dbReference type="GeneID" id="93778428"/>
<dbReference type="KEGG" id="ecp:ECP_3888"/>
<dbReference type="HOGENOM" id="CLU_046737_4_2_6"/>
<dbReference type="Proteomes" id="UP000009182">
    <property type="component" value="Chromosome"/>
</dbReference>
<dbReference type="GO" id="GO:0005737">
    <property type="term" value="C:cytoplasm"/>
    <property type="evidence" value="ECO:0007669"/>
    <property type="project" value="UniProtKB-SubCell"/>
</dbReference>
<dbReference type="GO" id="GO:0050821">
    <property type="term" value="P:protein stabilization"/>
    <property type="evidence" value="ECO:0007669"/>
    <property type="project" value="UniProtKB-UniRule"/>
</dbReference>
<dbReference type="CDD" id="cd06470">
    <property type="entry name" value="ACD_IbpA-B_like"/>
    <property type="match status" value="1"/>
</dbReference>
<dbReference type="FunFam" id="2.60.40.790:FF:000002">
    <property type="entry name" value="Small heat shock protein IbpA"/>
    <property type="match status" value="1"/>
</dbReference>
<dbReference type="Gene3D" id="2.60.40.790">
    <property type="match status" value="1"/>
</dbReference>
<dbReference type="HAMAP" id="MF_02000">
    <property type="entry name" value="HSP20_IbpA"/>
    <property type="match status" value="1"/>
</dbReference>
<dbReference type="InterPro" id="IPR002068">
    <property type="entry name" value="A-crystallin/Hsp20_dom"/>
</dbReference>
<dbReference type="InterPro" id="IPR037913">
    <property type="entry name" value="ACD_IbpA/B"/>
</dbReference>
<dbReference type="InterPro" id="IPR008978">
    <property type="entry name" value="HSP20-like_chaperone"/>
</dbReference>
<dbReference type="InterPro" id="IPR023728">
    <property type="entry name" value="HSP20_IbpA"/>
</dbReference>
<dbReference type="NCBIfam" id="NF008013">
    <property type="entry name" value="PRK10743.1"/>
    <property type="match status" value="1"/>
</dbReference>
<dbReference type="PANTHER" id="PTHR47062">
    <property type="match status" value="1"/>
</dbReference>
<dbReference type="PANTHER" id="PTHR47062:SF1">
    <property type="entry name" value="SMALL HEAT SHOCK PROTEIN IBPA"/>
    <property type="match status" value="1"/>
</dbReference>
<dbReference type="Pfam" id="PF00011">
    <property type="entry name" value="HSP20"/>
    <property type="match status" value="1"/>
</dbReference>
<dbReference type="SUPFAM" id="SSF49764">
    <property type="entry name" value="HSP20-like chaperones"/>
    <property type="match status" value="1"/>
</dbReference>
<dbReference type="PROSITE" id="PS01031">
    <property type="entry name" value="SHSP"/>
    <property type="match status" value="1"/>
</dbReference>
<evidence type="ECO:0000255" key="1">
    <source>
        <dbReference type="HAMAP-Rule" id="MF_02000"/>
    </source>
</evidence>
<evidence type="ECO:0000255" key="2">
    <source>
        <dbReference type="PROSITE-ProRule" id="PRU00285"/>
    </source>
</evidence>
<comment type="function">
    <text evidence="1">Associates with aggregated proteins, together with IbpB, to stabilize and protect them from irreversible denaturation and extensive proteolysis during heat shock and oxidative stress. Aggregated proteins bound to the IbpAB complex are more efficiently refolded and reactivated by the ATP-dependent chaperone systems ClpB and DnaK/DnaJ/GrpE. Its activity is ATP-independent.</text>
</comment>
<comment type="subunit">
    <text evidence="1">Monomer. Forms homomultimers of about 100-150 subunits at optimal growth temperatures. Conformation changes to monomers at high temperatures or high ionic concentrations.</text>
</comment>
<comment type="subcellular location">
    <subcellularLocation>
        <location evidence="1">Cytoplasm</location>
    </subcellularLocation>
</comment>
<comment type="similarity">
    <text evidence="1 2">Belongs to the small heat shock protein (HSP20) family.</text>
</comment>
<gene>
    <name evidence="1" type="primary">ibpA</name>
    <name type="ordered locus">ECP_3888</name>
</gene>
<accession>Q0TB20</accession>